<proteinExistence type="evidence at transcript level"/>
<organism>
    <name type="scientific">Cavia porcellus</name>
    <name type="common">Guinea pig</name>
    <dbReference type="NCBI Taxonomy" id="10141"/>
    <lineage>
        <taxon>Eukaryota</taxon>
        <taxon>Metazoa</taxon>
        <taxon>Chordata</taxon>
        <taxon>Craniata</taxon>
        <taxon>Vertebrata</taxon>
        <taxon>Euteleostomi</taxon>
        <taxon>Mammalia</taxon>
        <taxon>Eutheria</taxon>
        <taxon>Euarchontoglires</taxon>
        <taxon>Glires</taxon>
        <taxon>Rodentia</taxon>
        <taxon>Hystricomorpha</taxon>
        <taxon>Caviidae</taxon>
        <taxon>Cavia</taxon>
    </lineage>
</organism>
<sequence>MDDIFTQCREGNAVAVRLWLDNTENDLNQGDDHGFSPLHWACREGRSAVVEMLIMRGARINVMNRGDDTPLHLAASHGHRDIVQKLLQYKADINAVNEHGNVPLHYACFWGQDQVAEDLVANGALVSICNKYGEMPMDKAKAPLRELLRERAEKMGQNLNRIPYKDTFWKGTTRTRPRNGTLNKHSGIDFKQLNFLAKLNENHSGELWKGRWQGNDIVVKVLKVRDWSTRKSRDFNEECPRLRIFSHPNVLPVLGACQSPPAPHPTLITHWMPYGSLYNVLHEGTNFVVDQSQAVKFALDMARGMAFLHTLEPLIPRHALNSRSVMIDEDMTARISMADVKFSFQCPGRMYAPAWVAPEALQKKPEDTNRRSADMWSFAVLLWELVTREVPFADLSNMEIGMKVALEGRPTIPPGISPHVCKLMKICMNEDPAKRPKFDMIVPILEKMQDK</sequence>
<accession>P57044</accession>
<name>ILK_CAVPO</name>
<comment type="function">
    <text evidence="1 2 3">Scaffold protein which mediates protein-protein interactions during a range of cellular events including focal adhesion assembly, cell adhesion and cell migration (By similarity). Regulates integrin-mediated signal transduction by contributing to inside-out integrin activation (By similarity). Recruits PARVA and LIMS1/PITCH to form the heterotrimeric IPP (ILK-PINCH-PARVIN) complex which binds to F-actin via the C-terminal tail of LIMS1 and the N-terminal region of PARVA, promoting F-actin filament bundling, a process required to generate force for actin cytoskeleton reorganization and subsequent dynamic cell adhesion events such as cell spreading and migration (By similarity). Binding to PARVA promotes effective assembly of ILK into focal adhesions while PARVA-bound ILK can simultaneously engage integrin-beta cytoplasmic tails to mediate cell adhesion (By similarity). Plays a role with PARVG in promoting the cell adhesion and spreading of leukocytes. Acts as an upstream effector of both AKT1/PKB and GSK3 (By similarity). Mediates trafficking of caveolae to the cell surface in an ITGB1-dependent manner by promoting the recruitment of IQGAP1 to the cell cortex which cooperates with its effector DIAPH1 to locally stabilize microtubules and allow stable insertion of caveolae into the plasma membrane (By similarity). Required for the maintenance of mitotic spindle integrity by promoting phosphorylation of TACC3 by AURKA (By similarity). Associates with chromatin and may act as a negative regulator of transcription when located in the nucleus (By similarity).</text>
</comment>
<comment type="subunit">
    <text evidence="1 2">Component of the heterotrimeric IPP (ILK-PINCH-PARVIN) complex composed of ILK, LIMS1/PINCH and PARVA; the complex binds to F-actin via the C-terminal tail of LIMS1 and the N-terminal region of PARVA, promoting F-actin filament bundling. Formation of the IPP complex is dependent on protein kinase C and precedes integrin-mediated cell adhesion and spreading. ILK also interacts with LIMS2/PINCH2 and with PARVB and PARVG which may substitute for LIMS1 and PARVA in the IPP complex; PARVA and PARVB compete for the same binding site. Interaction with PARVG promotes the establishment of cell polarity required for leukocyte migration. Interacts with the cytoplasmic domain of integrin ITGB1 and may also interact with integrins ITGB2, ITGB3 and/or ITGB5. Interacts probably also with TGFB1I1. Interacts (via ANK repeats) with EPHA1 (via SAM domain); stimulated by EFNA1 but independent of the kinase activity of EPHA1. Interacts with FERMT2. Interacts with LIMD2; leading to activate the protein kinase activity. Interacts with PXN/PAXILLIN (via LD motif 4). Interacts with CCDC25 (via cytoplasmic region); initiating the ILK-PARVB cascade to induce cytoskeleton rearrangement and directional migration of cells. Interacts with IQGAP1; the interaction is required for localization of IQGAP1 to the cell cortex.</text>
</comment>
<comment type="subcellular location">
    <subcellularLocation>
        <location evidence="2">Cell junction</location>
        <location evidence="2">Focal adhesion</location>
    </subcellularLocation>
    <subcellularLocation>
        <location evidence="2">Cell membrane</location>
        <topology evidence="2">Peripheral membrane protein</topology>
        <orientation evidence="2">Cytoplasmic side</orientation>
    </subcellularLocation>
    <subcellularLocation>
        <location evidence="1">Cell projection</location>
        <location evidence="1">Lamellipodium</location>
    </subcellularLocation>
    <subcellularLocation>
        <location evidence="2">Cytoplasm</location>
        <location evidence="2">Myofibril</location>
        <location evidence="2">Sarcomere</location>
    </subcellularLocation>
    <subcellularLocation>
        <location evidence="2">Cytoplasm</location>
    </subcellularLocation>
    <subcellularLocation>
        <location evidence="2">Nucleus</location>
    </subcellularLocation>
    <subcellularLocation>
        <location evidence="2">Cytoplasm</location>
        <location evidence="2">Cytoskeleton</location>
        <location evidence="2">Microtubule organizing center</location>
        <location evidence="2">Centrosome</location>
    </subcellularLocation>
    <subcellularLocation>
        <location evidence="2">Cytoplasm</location>
        <location evidence="2">Cell cortex</location>
    </subcellularLocation>
</comment>
<comment type="domain">
    <text evidence="2">The kinase domain is likely to have lost catalytic activity but retains ATP-binding activity. ATP structurally stabilizes the kinase domain and promotes stability of binding to PARVA as well as focal adhesion stability.</text>
</comment>
<comment type="domain">
    <text evidence="2">The PH-like region is not required for assembly of the IPP complex or for localization of ILK to focal adhesions.</text>
</comment>
<comment type="PTM">
    <text evidence="2">Phosphorylation by PAK1 modulates ILK subcellular location by promoting its nuclear export.</text>
</comment>
<comment type="similarity">
    <text evidence="5">Belongs to the protein kinase superfamily. TKL Ser/Thr protein kinase family.</text>
</comment>
<comment type="caution">
    <text evidence="2">Was originally thought to act as a serine/threonine-protein kinase. Now thought to be a pseudokinase which does not have kinase activity and which functions solely as a scaffold protein.</text>
</comment>
<feature type="chain" id="PRO_0000086019" description="Scaffold protein ILK">
    <location>
        <begin position="1"/>
        <end position="451"/>
    </location>
</feature>
<feature type="repeat" description="ANK 1" evidence="2">
    <location>
        <begin position="2"/>
        <end position="30"/>
    </location>
</feature>
<feature type="repeat" description="ANK 2" evidence="2">
    <location>
        <begin position="31"/>
        <end position="63"/>
    </location>
</feature>
<feature type="repeat" description="ANK 3" evidence="2">
    <location>
        <begin position="64"/>
        <end position="96"/>
    </location>
</feature>
<feature type="repeat" description="ANK 4" evidence="2">
    <location>
        <begin position="97"/>
        <end position="129"/>
    </location>
</feature>
<feature type="repeat" description="ANK 5" evidence="2">
    <location>
        <begin position="130"/>
        <end position="174"/>
    </location>
</feature>
<feature type="domain" description="Protein kinase" evidence="4">
    <location>
        <begin position="193"/>
        <end position="445"/>
    </location>
</feature>
<feature type="region of interest" description="Interaction with LIMS1" evidence="2">
    <location>
        <begin position="33"/>
        <end position="139"/>
    </location>
</feature>
<feature type="region of interest" description="PH-like; mediates interaction with TGFB1I1" evidence="1">
    <location>
        <begin position="180"/>
        <end position="212"/>
    </location>
</feature>
<feature type="short sequence motif" description="Nuclear localization signal" evidence="2">
    <location>
        <begin position="363"/>
        <end position="371"/>
    </location>
</feature>
<feature type="binding site" evidence="2">
    <location>
        <position position="200"/>
    </location>
    <ligand>
        <name>ATP</name>
        <dbReference type="ChEBI" id="CHEBI:30616"/>
    </ligand>
</feature>
<feature type="binding site" evidence="2">
    <location>
        <position position="202"/>
    </location>
    <ligand>
        <name>ATP</name>
        <dbReference type="ChEBI" id="CHEBI:30616"/>
    </ligand>
</feature>
<feature type="binding site" evidence="2">
    <location>
        <position position="203"/>
    </location>
    <ligand>
        <name>ATP</name>
        <dbReference type="ChEBI" id="CHEBI:30616"/>
    </ligand>
</feature>
<feature type="binding site" evidence="2">
    <location>
        <position position="204"/>
    </location>
    <ligand>
        <name>ATP</name>
        <dbReference type="ChEBI" id="CHEBI:30616"/>
    </ligand>
</feature>
<feature type="binding site" evidence="2">
    <location>
        <position position="270"/>
    </location>
    <ligand>
        <name>ATP</name>
        <dbReference type="ChEBI" id="CHEBI:30616"/>
    </ligand>
</feature>
<feature type="binding site" evidence="2">
    <location>
        <position position="272"/>
    </location>
    <ligand>
        <name>ATP</name>
        <dbReference type="ChEBI" id="CHEBI:30616"/>
    </ligand>
</feature>
<feature type="binding site" evidence="2">
    <location>
        <position position="279"/>
    </location>
    <ligand>
        <name>ATP</name>
        <dbReference type="ChEBI" id="CHEBI:30616"/>
    </ligand>
</feature>
<feature type="binding site" evidence="2">
    <location>
        <position position="339"/>
    </location>
    <ligand>
        <name>Mg(2+)</name>
        <dbReference type="ChEBI" id="CHEBI:18420"/>
    </ligand>
</feature>
<feature type="binding site" evidence="2">
    <location>
        <position position="341"/>
    </location>
    <ligand>
        <name>ATP</name>
        <dbReference type="ChEBI" id="CHEBI:30616"/>
    </ligand>
</feature>
<feature type="modified residue" description="N-acetylmethionine" evidence="2">
    <location>
        <position position="1"/>
    </location>
</feature>
<feature type="modified residue" description="Phosphothreonine" evidence="2">
    <location>
        <position position="173"/>
    </location>
</feature>
<feature type="modified residue" description="Phosphoserine" evidence="2">
    <location>
        <position position="186"/>
    </location>
</feature>
<feature type="modified residue" description="Phosphoserine" evidence="2">
    <location>
        <position position="246"/>
    </location>
</feature>
<feature type="modified residue" description="N6-acetyllysine" evidence="1">
    <location>
        <position position="425"/>
    </location>
</feature>
<reference key="1">
    <citation type="submission" date="2000-04" db="EMBL/GenBank/DDBJ databases">
        <title>Guinea pig beta-integrin-linked kinase.</title>
        <authorList>
            <person name="Ishii T."/>
        </authorList>
    </citation>
    <scope>NUCLEOTIDE SEQUENCE [MRNA]</scope>
</reference>
<protein>
    <recommendedName>
        <fullName evidence="5">Scaffold protein ILK</fullName>
    </recommendedName>
    <alternativeName>
        <fullName evidence="2">ILK-1</fullName>
    </alternativeName>
    <alternativeName>
        <fullName evidence="2">ILK-2</fullName>
    </alternativeName>
    <alternativeName>
        <fullName evidence="5">Inactive integrin-linked kinase</fullName>
    </alternativeName>
    <alternativeName>
        <fullName evidence="2">p59ILK</fullName>
    </alternativeName>
</protein>
<dbReference type="EMBL" id="AF256520">
    <property type="protein sequence ID" value="AAF70501.1"/>
    <property type="molecule type" value="mRNA"/>
</dbReference>
<dbReference type="RefSeq" id="NP_001166442.1">
    <property type="nucleotide sequence ID" value="NM_001172971.1"/>
</dbReference>
<dbReference type="BMRB" id="P57044"/>
<dbReference type="SMR" id="P57044"/>
<dbReference type="STRING" id="10141.ENSCPOP00000011264"/>
<dbReference type="GeneID" id="100135559"/>
<dbReference type="KEGG" id="cpoc:100135559"/>
<dbReference type="CTD" id="3611"/>
<dbReference type="eggNOG" id="KOG0195">
    <property type="taxonomic scope" value="Eukaryota"/>
</dbReference>
<dbReference type="HOGENOM" id="CLU_000288_7_5_1"/>
<dbReference type="InParanoid" id="P57044"/>
<dbReference type="OrthoDB" id="6718656at2759"/>
<dbReference type="Proteomes" id="UP000005447">
    <property type="component" value="Unassembled WGS sequence"/>
</dbReference>
<dbReference type="GO" id="GO:0005938">
    <property type="term" value="C:cell cortex"/>
    <property type="evidence" value="ECO:0007669"/>
    <property type="project" value="UniProtKB-SubCell"/>
</dbReference>
<dbReference type="GO" id="GO:0005813">
    <property type="term" value="C:centrosome"/>
    <property type="evidence" value="ECO:0000250"/>
    <property type="project" value="UniProtKB"/>
</dbReference>
<dbReference type="GO" id="GO:0000785">
    <property type="term" value="C:chromatin"/>
    <property type="evidence" value="ECO:0000250"/>
    <property type="project" value="UniProtKB"/>
</dbReference>
<dbReference type="GO" id="GO:0005737">
    <property type="term" value="C:cytoplasm"/>
    <property type="evidence" value="ECO:0000250"/>
    <property type="project" value="UniProtKB"/>
</dbReference>
<dbReference type="GO" id="GO:0005925">
    <property type="term" value="C:focal adhesion"/>
    <property type="evidence" value="ECO:0007669"/>
    <property type="project" value="UniProtKB-SubCell"/>
</dbReference>
<dbReference type="GO" id="GO:0030027">
    <property type="term" value="C:lamellipodium"/>
    <property type="evidence" value="ECO:0007669"/>
    <property type="project" value="UniProtKB-SubCell"/>
</dbReference>
<dbReference type="GO" id="GO:0005634">
    <property type="term" value="C:nucleus"/>
    <property type="evidence" value="ECO:0000250"/>
    <property type="project" value="UniProtKB"/>
</dbReference>
<dbReference type="GO" id="GO:0005886">
    <property type="term" value="C:plasma membrane"/>
    <property type="evidence" value="ECO:0007669"/>
    <property type="project" value="UniProtKB-SubCell"/>
</dbReference>
<dbReference type="GO" id="GO:0030017">
    <property type="term" value="C:sarcomere"/>
    <property type="evidence" value="ECO:0007669"/>
    <property type="project" value="UniProtKB-SubCell"/>
</dbReference>
<dbReference type="GO" id="GO:0001725">
    <property type="term" value="C:stress fiber"/>
    <property type="evidence" value="ECO:0007669"/>
    <property type="project" value="TreeGrafter"/>
</dbReference>
<dbReference type="GO" id="GO:0005524">
    <property type="term" value="F:ATP binding"/>
    <property type="evidence" value="ECO:0000250"/>
    <property type="project" value="UniProtKB"/>
</dbReference>
<dbReference type="GO" id="GO:0005178">
    <property type="term" value="F:integrin binding"/>
    <property type="evidence" value="ECO:0000250"/>
    <property type="project" value="UniProtKB"/>
</dbReference>
<dbReference type="GO" id="GO:0000287">
    <property type="term" value="F:magnesium ion binding"/>
    <property type="evidence" value="ECO:0000250"/>
    <property type="project" value="UniProtKB"/>
</dbReference>
<dbReference type="GO" id="GO:0004672">
    <property type="term" value="F:protein kinase activity"/>
    <property type="evidence" value="ECO:0007669"/>
    <property type="project" value="InterPro"/>
</dbReference>
<dbReference type="GO" id="GO:0070836">
    <property type="term" value="P:caveola assembly"/>
    <property type="evidence" value="ECO:0000250"/>
    <property type="project" value="UniProtKB"/>
</dbReference>
<dbReference type="GO" id="GO:0007160">
    <property type="term" value="P:cell-matrix adhesion"/>
    <property type="evidence" value="ECO:0007669"/>
    <property type="project" value="TreeGrafter"/>
</dbReference>
<dbReference type="GO" id="GO:0007229">
    <property type="term" value="P:integrin-mediated signaling pathway"/>
    <property type="evidence" value="ECO:0007669"/>
    <property type="project" value="TreeGrafter"/>
</dbReference>
<dbReference type="GO" id="GO:0007052">
    <property type="term" value="P:mitotic spindle organization"/>
    <property type="evidence" value="ECO:0000250"/>
    <property type="project" value="UniProtKB"/>
</dbReference>
<dbReference type="GO" id="GO:0072697">
    <property type="term" value="P:protein localization to cell cortex"/>
    <property type="evidence" value="ECO:0000250"/>
    <property type="project" value="UniProtKB"/>
</dbReference>
<dbReference type="GO" id="GO:0034446">
    <property type="term" value="P:substrate adhesion-dependent cell spreading"/>
    <property type="evidence" value="ECO:0007669"/>
    <property type="project" value="TreeGrafter"/>
</dbReference>
<dbReference type="CDD" id="cd14057">
    <property type="entry name" value="PK_ILK"/>
    <property type="match status" value="1"/>
</dbReference>
<dbReference type="FunFam" id="3.30.200.20:FF:000245">
    <property type="entry name" value="Integrin-linked protein kinase"/>
    <property type="match status" value="1"/>
</dbReference>
<dbReference type="FunFam" id="1.10.510.10:FF:000187">
    <property type="entry name" value="integrin-linked protein kinase"/>
    <property type="match status" value="1"/>
</dbReference>
<dbReference type="FunFam" id="1.25.40.20:FF:000050">
    <property type="entry name" value="integrin-linked protein kinase"/>
    <property type="match status" value="1"/>
</dbReference>
<dbReference type="Gene3D" id="1.25.40.20">
    <property type="entry name" value="Ankyrin repeat-containing domain"/>
    <property type="match status" value="1"/>
</dbReference>
<dbReference type="Gene3D" id="3.30.200.20">
    <property type="entry name" value="Phosphorylase Kinase, domain 1"/>
    <property type="match status" value="1"/>
</dbReference>
<dbReference type="Gene3D" id="1.10.510.10">
    <property type="entry name" value="Transferase(Phosphotransferase) domain 1"/>
    <property type="match status" value="1"/>
</dbReference>
<dbReference type="InterPro" id="IPR002110">
    <property type="entry name" value="Ankyrin_rpt"/>
</dbReference>
<dbReference type="InterPro" id="IPR036770">
    <property type="entry name" value="Ankyrin_rpt-contain_sf"/>
</dbReference>
<dbReference type="InterPro" id="IPR011009">
    <property type="entry name" value="Kinase-like_dom_sf"/>
</dbReference>
<dbReference type="InterPro" id="IPR035692">
    <property type="entry name" value="PK_ILK"/>
</dbReference>
<dbReference type="InterPro" id="IPR000719">
    <property type="entry name" value="Prot_kinase_dom"/>
</dbReference>
<dbReference type="InterPro" id="IPR001245">
    <property type="entry name" value="Ser-Thr/Tyr_kinase_cat_dom"/>
</dbReference>
<dbReference type="InterPro" id="IPR051681">
    <property type="entry name" value="Ser/Thr_Kinases-Pseudokinases"/>
</dbReference>
<dbReference type="PANTHER" id="PTHR44329:SF57">
    <property type="entry name" value="INTEGRIN-LINKED PROTEIN KINASE"/>
    <property type="match status" value="1"/>
</dbReference>
<dbReference type="PANTHER" id="PTHR44329">
    <property type="entry name" value="SERINE/THREONINE-PROTEIN KINASE TNNI3K-RELATED"/>
    <property type="match status" value="1"/>
</dbReference>
<dbReference type="Pfam" id="PF12796">
    <property type="entry name" value="Ank_2"/>
    <property type="match status" value="2"/>
</dbReference>
<dbReference type="Pfam" id="PF07714">
    <property type="entry name" value="PK_Tyr_Ser-Thr"/>
    <property type="match status" value="1"/>
</dbReference>
<dbReference type="PIRSF" id="PIRSF000654">
    <property type="entry name" value="Integrin-linked_kinase"/>
    <property type="match status" value="1"/>
</dbReference>
<dbReference type="SMART" id="SM00248">
    <property type="entry name" value="ANK"/>
    <property type="match status" value="3"/>
</dbReference>
<dbReference type="SUPFAM" id="SSF48403">
    <property type="entry name" value="Ankyrin repeat"/>
    <property type="match status" value="1"/>
</dbReference>
<dbReference type="SUPFAM" id="SSF56112">
    <property type="entry name" value="Protein kinase-like (PK-like)"/>
    <property type="match status" value="1"/>
</dbReference>
<dbReference type="PROSITE" id="PS50297">
    <property type="entry name" value="ANK_REP_REGION"/>
    <property type="match status" value="1"/>
</dbReference>
<dbReference type="PROSITE" id="PS50088">
    <property type="entry name" value="ANK_REPEAT"/>
    <property type="match status" value="3"/>
</dbReference>
<dbReference type="PROSITE" id="PS50011">
    <property type="entry name" value="PROTEIN_KINASE_DOM"/>
    <property type="match status" value="1"/>
</dbReference>
<gene>
    <name evidence="2" type="primary">ILK</name>
    <name evidence="2" type="synonym">ILK1</name>
    <name evidence="2" type="synonym">ILK2</name>
</gene>
<evidence type="ECO:0000250" key="1">
    <source>
        <dbReference type="UniProtKB" id="O55222"/>
    </source>
</evidence>
<evidence type="ECO:0000250" key="2">
    <source>
        <dbReference type="UniProtKB" id="Q13418"/>
    </source>
</evidence>
<evidence type="ECO:0000250" key="3">
    <source>
        <dbReference type="UniProtKB" id="Q99J82"/>
    </source>
</evidence>
<evidence type="ECO:0000255" key="4">
    <source>
        <dbReference type="PROSITE-ProRule" id="PRU00159"/>
    </source>
</evidence>
<evidence type="ECO:0000305" key="5"/>
<keyword id="KW-0007">Acetylation</keyword>
<keyword id="KW-0040">ANK repeat</keyword>
<keyword id="KW-0067">ATP-binding</keyword>
<keyword id="KW-0965">Cell junction</keyword>
<keyword id="KW-1003">Cell membrane</keyword>
<keyword id="KW-0966">Cell projection</keyword>
<keyword id="KW-0963">Cytoplasm</keyword>
<keyword id="KW-0206">Cytoskeleton</keyword>
<keyword id="KW-0460">Magnesium</keyword>
<keyword id="KW-0472">Membrane</keyword>
<keyword id="KW-0479">Metal-binding</keyword>
<keyword id="KW-0547">Nucleotide-binding</keyword>
<keyword id="KW-0539">Nucleus</keyword>
<keyword id="KW-0597">Phosphoprotein</keyword>
<keyword id="KW-1185">Reference proteome</keyword>
<keyword id="KW-0677">Repeat</keyword>